<accession>B4TY78</accession>
<feature type="chain" id="PRO_1000190110" description="Thiosulfate sulfurtransferase GlpE">
    <location>
        <begin position="1"/>
        <end position="108"/>
    </location>
</feature>
<feature type="domain" description="Rhodanese" evidence="1">
    <location>
        <begin position="17"/>
        <end position="105"/>
    </location>
</feature>
<feature type="active site" description="Cysteine persulfide intermediate" evidence="1">
    <location>
        <position position="65"/>
    </location>
</feature>
<gene>
    <name evidence="1" type="primary">glpE</name>
    <name type="ordered locus">SeSA_A3717</name>
</gene>
<evidence type="ECO:0000255" key="1">
    <source>
        <dbReference type="HAMAP-Rule" id="MF_01009"/>
    </source>
</evidence>
<sequence length="108" mass="11973">MEQFECITVEEAYQKLHQGAAVLVDIRDPQSYAMGHAPQAFHLTNDTLGAFMREHGFDTAVMVMCYHGNSSKGAAQYLLQQGYDAVYSIDGGFEAWHRRFPADVANGA</sequence>
<comment type="function">
    <text evidence="1">Transferase that catalyzes the transfer of sulfur from thiosulfate to thiophilic acceptors such as cyanide or dithiols. May function in a CysM-independent thiosulfate assimilation pathway by catalyzing the conversion of thiosulfate to sulfite, which can then be used for L-cysteine biosynthesis.</text>
</comment>
<comment type="catalytic activity">
    <reaction evidence="1">
        <text>thiosulfate + hydrogen cyanide = thiocyanate + sulfite + 2 H(+)</text>
        <dbReference type="Rhea" id="RHEA:16881"/>
        <dbReference type="ChEBI" id="CHEBI:15378"/>
        <dbReference type="ChEBI" id="CHEBI:17359"/>
        <dbReference type="ChEBI" id="CHEBI:18022"/>
        <dbReference type="ChEBI" id="CHEBI:18407"/>
        <dbReference type="ChEBI" id="CHEBI:33542"/>
        <dbReference type="EC" id="2.8.1.1"/>
    </reaction>
</comment>
<comment type="catalytic activity">
    <reaction evidence="1">
        <text>thiosulfate + [thioredoxin]-dithiol = [thioredoxin]-disulfide + hydrogen sulfide + sulfite + 2 H(+)</text>
        <dbReference type="Rhea" id="RHEA:83859"/>
        <dbReference type="Rhea" id="RHEA-COMP:10698"/>
        <dbReference type="Rhea" id="RHEA-COMP:10700"/>
        <dbReference type="ChEBI" id="CHEBI:15378"/>
        <dbReference type="ChEBI" id="CHEBI:17359"/>
        <dbReference type="ChEBI" id="CHEBI:29919"/>
        <dbReference type="ChEBI" id="CHEBI:29950"/>
        <dbReference type="ChEBI" id="CHEBI:33542"/>
        <dbReference type="ChEBI" id="CHEBI:50058"/>
    </reaction>
</comment>
<comment type="subcellular location">
    <subcellularLocation>
        <location evidence="1">Cytoplasm</location>
    </subcellularLocation>
</comment>
<comment type="similarity">
    <text evidence="1">Belongs to the GlpE family.</text>
</comment>
<name>GLPE_SALSV</name>
<reference key="1">
    <citation type="journal article" date="2011" name="J. Bacteriol.">
        <title>Comparative genomics of 28 Salmonella enterica isolates: evidence for CRISPR-mediated adaptive sublineage evolution.</title>
        <authorList>
            <person name="Fricke W.F."/>
            <person name="Mammel M.K."/>
            <person name="McDermott P.F."/>
            <person name="Tartera C."/>
            <person name="White D.G."/>
            <person name="Leclerc J.E."/>
            <person name="Ravel J."/>
            <person name="Cebula T.A."/>
        </authorList>
    </citation>
    <scope>NUCLEOTIDE SEQUENCE [LARGE SCALE GENOMIC DNA]</scope>
    <source>
        <strain>CVM19633</strain>
    </source>
</reference>
<dbReference type="EC" id="2.8.1.1" evidence="1"/>
<dbReference type="EMBL" id="CP001127">
    <property type="protein sequence ID" value="ACF88995.1"/>
    <property type="molecule type" value="Genomic_DNA"/>
</dbReference>
<dbReference type="RefSeq" id="WP_000434523.1">
    <property type="nucleotide sequence ID" value="NC_011094.1"/>
</dbReference>
<dbReference type="SMR" id="B4TY78"/>
<dbReference type="KEGG" id="sew:SeSA_A3717"/>
<dbReference type="HOGENOM" id="CLU_089574_14_0_6"/>
<dbReference type="Proteomes" id="UP000001865">
    <property type="component" value="Chromosome"/>
</dbReference>
<dbReference type="GO" id="GO:0005737">
    <property type="term" value="C:cytoplasm"/>
    <property type="evidence" value="ECO:0007669"/>
    <property type="project" value="UniProtKB-SubCell"/>
</dbReference>
<dbReference type="GO" id="GO:0004792">
    <property type="term" value="F:thiosulfate-cyanide sulfurtransferase activity"/>
    <property type="evidence" value="ECO:0007669"/>
    <property type="project" value="UniProtKB-UniRule"/>
</dbReference>
<dbReference type="GO" id="GO:0006071">
    <property type="term" value="P:glycerol metabolic process"/>
    <property type="evidence" value="ECO:0007669"/>
    <property type="project" value="UniProtKB-UniRule"/>
</dbReference>
<dbReference type="CDD" id="cd01444">
    <property type="entry name" value="GlpE_ST"/>
    <property type="match status" value="1"/>
</dbReference>
<dbReference type="FunFam" id="3.40.250.10:FF:000007">
    <property type="entry name" value="Thiosulfate sulfurtransferase GlpE"/>
    <property type="match status" value="1"/>
</dbReference>
<dbReference type="Gene3D" id="3.40.250.10">
    <property type="entry name" value="Rhodanese-like domain"/>
    <property type="match status" value="1"/>
</dbReference>
<dbReference type="HAMAP" id="MF_01009">
    <property type="entry name" value="Thiosulf_sulfurtr"/>
    <property type="match status" value="1"/>
</dbReference>
<dbReference type="InterPro" id="IPR050229">
    <property type="entry name" value="GlpE_sulfurtransferase"/>
</dbReference>
<dbReference type="InterPro" id="IPR001763">
    <property type="entry name" value="Rhodanese-like_dom"/>
</dbReference>
<dbReference type="InterPro" id="IPR036873">
    <property type="entry name" value="Rhodanese-like_dom_sf"/>
</dbReference>
<dbReference type="InterPro" id="IPR023695">
    <property type="entry name" value="Thiosulf_sulfurTrfase"/>
</dbReference>
<dbReference type="NCBIfam" id="NF001195">
    <property type="entry name" value="PRK00162.1"/>
    <property type="match status" value="1"/>
</dbReference>
<dbReference type="PANTHER" id="PTHR43031">
    <property type="entry name" value="FAD-DEPENDENT OXIDOREDUCTASE"/>
    <property type="match status" value="1"/>
</dbReference>
<dbReference type="PANTHER" id="PTHR43031:SF6">
    <property type="entry name" value="THIOSULFATE SULFURTRANSFERASE GLPE"/>
    <property type="match status" value="1"/>
</dbReference>
<dbReference type="Pfam" id="PF00581">
    <property type="entry name" value="Rhodanese"/>
    <property type="match status" value="1"/>
</dbReference>
<dbReference type="SMART" id="SM00450">
    <property type="entry name" value="RHOD"/>
    <property type="match status" value="1"/>
</dbReference>
<dbReference type="SUPFAM" id="SSF52821">
    <property type="entry name" value="Rhodanese/Cell cycle control phosphatase"/>
    <property type="match status" value="1"/>
</dbReference>
<dbReference type="PROSITE" id="PS50206">
    <property type="entry name" value="RHODANESE_3"/>
    <property type="match status" value="1"/>
</dbReference>
<protein>
    <recommendedName>
        <fullName evidence="1">Thiosulfate sulfurtransferase GlpE</fullName>
        <ecNumber evidence="1">2.8.1.1</ecNumber>
    </recommendedName>
</protein>
<proteinExistence type="inferred from homology"/>
<keyword id="KW-0963">Cytoplasm</keyword>
<keyword id="KW-0808">Transferase</keyword>
<organism>
    <name type="scientific">Salmonella schwarzengrund (strain CVM19633)</name>
    <dbReference type="NCBI Taxonomy" id="439843"/>
    <lineage>
        <taxon>Bacteria</taxon>
        <taxon>Pseudomonadati</taxon>
        <taxon>Pseudomonadota</taxon>
        <taxon>Gammaproteobacteria</taxon>
        <taxon>Enterobacterales</taxon>
        <taxon>Enterobacteriaceae</taxon>
        <taxon>Salmonella</taxon>
    </lineage>
</organism>